<name>ULAF_ECO45</name>
<protein>
    <recommendedName>
        <fullName evidence="1">L-ribulose-5-phosphate 4-epimerase UlaF</fullName>
        <ecNumber evidence="1">5.1.3.4</ecNumber>
    </recommendedName>
    <alternativeName>
        <fullName evidence="1">L-ascorbate utilization protein F</fullName>
    </alternativeName>
    <alternativeName>
        <fullName evidence="1">Phosphoribulose isomerase</fullName>
    </alternativeName>
</protein>
<proteinExistence type="inferred from homology"/>
<organism>
    <name type="scientific">Escherichia coli O45:K1 (strain S88 / ExPEC)</name>
    <dbReference type="NCBI Taxonomy" id="585035"/>
    <lineage>
        <taxon>Bacteria</taxon>
        <taxon>Pseudomonadati</taxon>
        <taxon>Pseudomonadota</taxon>
        <taxon>Gammaproteobacteria</taxon>
        <taxon>Enterobacterales</taxon>
        <taxon>Enterobacteriaceae</taxon>
        <taxon>Escherichia</taxon>
    </lineage>
</organism>
<evidence type="ECO:0000255" key="1">
    <source>
        <dbReference type="HAMAP-Rule" id="MF_01952"/>
    </source>
</evidence>
<dbReference type="EC" id="5.1.3.4" evidence="1"/>
<dbReference type="EMBL" id="CU928161">
    <property type="protein sequence ID" value="CAR05933.1"/>
    <property type="molecule type" value="Genomic_DNA"/>
</dbReference>
<dbReference type="RefSeq" id="WP_001170855.1">
    <property type="nucleotide sequence ID" value="NC_011742.1"/>
</dbReference>
<dbReference type="SMR" id="B7MLK3"/>
<dbReference type="KEGG" id="ecz:ECS88_4784"/>
<dbReference type="HOGENOM" id="CLU_006033_5_0_6"/>
<dbReference type="UniPathway" id="UPA00263">
    <property type="reaction ID" value="UER00380"/>
</dbReference>
<dbReference type="Proteomes" id="UP000000747">
    <property type="component" value="Chromosome"/>
</dbReference>
<dbReference type="GO" id="GO:0005829">
    <property type="term" value="C:cytosol"/>
    <property type="evidence" value="ECO:0007669"/>
    <property type="project" value="TreeGrafter"/>
</dbReference>
<dbReference type="GO" id="GO:0016832">
    <property type="term" value="F:aldehyde-lyase activity"/>
    <property type="evidence" value="ECO:0007669"/>
    <property type="project" value="TreeGrafter"/>
</dbReference>
<dbReference type="GO" id="GO:0008742">
    <property type="term" value="F:L-ribulose-phosphate 4-epimerase activity"/>
    <property type="evidence" value="ECO:0007669"/>
    <property type="project" value="UniProtKB-UniRule"/>
</dbReference>
<dbReference type="GO" id="GO:0008270">
    <property type="term" value="F:zinc ion binding"/>
    <property type="evidence" value="ECO:0007669"/>
    <property type="project" value="UniProtKB-UniRule"/>
</dbReference>
<dbReference type="GO" id="GO:0019854">
    <property type="term" value="P:L-ascorbic acid catabolic process"/>
    <property type="evidence" value="ECO:0007669"/>
    <property type="project" value="UniProtKB-UniRule"/>
</dbReference>
<dbReference type="GO" id="GO:0019323">
    <property type="term" value="P:pentose catabolic process"/>
    <property type="evidence" value="ECO:0007669"/>
    <property type="project" value="TreeGrafter"/>
</dbReference>
<dbReference type="CDD" id="cd00398">
    <property type="entry name" value="Aldolase_II"/>
    <property type="match status" value="1"/>
</dbReference>
<dbReference type="FunFam" id="3.40.225.10:FF:000001">
    <property type="entry name" value="L-ribulose-5-phosphate 4-epimerase UlaF"/>
    <property type="match status" value="1"/>
</dbReference>
<dbReference type="Gene3D" id="3.40.225.10">
    <property type="entry name" value="Class II aldolase/adducin N-terminal domain"/>
    <property type="match status" value="1"/>
</dbReference>
<dbReference type="HAMAP" id="MF_01952">
    <property type="entry name" value="UlaF"/>
    <property type="match status" value="1"/>
</dbReference>
<dbReference type="InterPro" id="IPR050197">
    <property type="entry name" value="Aldolase_class_II_sugar_metab"/>
</dbReference>
<dbReference type="InterPro" id="IPR001303">
    <property type="entry name" value="Aldolase_II/adducin_N"/>
</dbReference>
<dbReference type="InterPro" id="IPR036409">
    <property type="entry name" value="Aldolase_II/adducin_N_sf"/>
</dbReference>
<dbReference type="InterPro" id="IPR023499">
    <property type="entry name" value="UlaF"/>
</dbReference>
<dbReference type="NCBIfam" id="NF006047">
    <property type="entry name" value="PRK08193.1"/>
    <property type="match status" value="1"/>
</dbReference>
<dbReference type="NCBIfam" id="NF009003">
    <property type="entry name" value="PRK12348.1"/>
    <property type="match status" value="1"/>
</dbReference>
<dbReference type="PANTHER" id="PTHR22789">
    <property type="entry name" value="FUCULOSE PHOSPHATE ALDOLASE"/>
    <property type="match status" value="1"/>
</dbReference>
<dbReference type="PANTHER" id="PTHR22789:SF9">
    <property type="entry name" value="L-RIBULOSE-5-PHOSPHATE 4-EPIMERASE ULAF"/>
    <property type="match status" value="1"/>
</dbReference>
<dbReference type="Pfam" id="PF00596">
    <property type="entry name" value="Aldolase_II"/>
    <property type="match status" value="1"/>
</dbReference>
<dbReference type="SMART" id="SM01007">
    <property type="entry name" value="Aldolase_II"/>
    <property type="match status" value="1"/>
</dbReference>
<dbReference type="SUPFAM" id="SSF53639">
    <property type="entry name" value="AraD/HMP-PK domain-like"/>
    <property type="match status" value="1"/>
</dbReference>
<gene>
    <name evidence="1" type="primary">ulaF</name>
    <name type="ordered locus">ECS88_4784</name>
</gene>
<feature type="chain" id="PRO_1000188840" description="L-ribulose-5-phosphate 4-epimerase UlaF">
    <location>
        <begin position="1"/>
        <end position="228"/>
    </location>
</feature>
<feature type="active site" description="Proton donor/acceptor" evidence="1">
    <location>
        <position position="118"/>
    </location>
</feature>
<feature type="active site" description="Proton donor/acceptor" evidence="1">
    <location>
        <position position="225"/>
    </location>
</feature>
<feature type="binding site" evidence="1">
    <location>
        <begin position="26"/>
        <end position="27"/>
    </location>
    <ligand>
        <name>substrate</name>
    </ligand>
</feature>
<feature type="binding site" evidence="1">
    <location>
        <begin position="43"/>
        <end position="44"/>
    </location>
    <ligand>
        <name>substrate</name>
    </ligand>
</feature>
<feature type="binding site" evidence="1">
    <location>
        <begin position="72"/>
        <end position="73"/>
    </location>
    <ligand>
        <name>substrate</name>
    </ligand>
</feature>
<feature type="binding site" evidence="1">
    <location>
        <position position="74"/>
    </location>
    <ligand>
        <name>Zn(2+)</name>
        <dbReference type="ChEBI" id="CHEBI:29105"/>
    </ligand>
</feature>
<feature type="binding site" evidence="1">
    <location>
        <position position="93"/>
    </location>
    <ligand>
        <name>Zn(2+)</name>
        <dbReference type="ChEBI" id="CHEBI:29105"/>
    </ligand>
</feature>
<feature type="binding site" evidence="1">
    <location>
        <position position="95"/>
    </location>
    <ligand>
        <name>Zn(2+)</name>
        <dbReference type="ChEBI" id="CHEBI:29105"/>
    </ligand>
</feature>
<feature type="binding site" evidence="1">
    <location>
        <position position="167"/>
    </location>
    <ligand>
        <name>Zn(2+)</name>
        <dbReference type="ChEBI" id="CHEBI:29105"/>
    </ligand>
</feature>
<reference key="1">
    <citation type="journal article" date="2009" name="PLoS Genet.">
        <title>Organised genome dynamics in the Escherichia coli species results in highly diverse adaptive paths.</title>
        <authorList>
            <person name="Touchon M."/>
            <person name="Hoede C."/>
            <person name="Tenaillon O."/>
            <person name="Barbe V."/>
            <person name="Baeriswyl S."/>
            <person name="Bidet P."/>
            <person name="Bingen E."/>
            <person name="Bonacorsi S."/>
            <person name="Bouchier C."/>
            <person name="Bouvet O."/>
            <person name="Calteau A."/>
            <person name="Chiapello H."/>
            <person name="Clermont O."/>
            <person name="Cruveiller S."/>
            <person name="Danchin A."/>
            <person name="Diard M."/>
            <person name="Dossat C."/>
            <person name="Karoui M.E."/>
            <person name="Frapy E."/>
            <person name="Garry L."/>
            <person name="Ghigo J.M."/>
            <person name="Gilles A.M."/>
            <person name="Johnson J."/>
            <person name="Le Bouguenec C."/>
            <person name="Lescat M."/>
            <person name="Mangenot S."/>
            <person name="Martinez-Jehanne V."/>
            <person name="Matic I."/>
            <person name="Nassif X."/>
            <person name="Oztas S."/>
            <person name="Petit M.A."/>
            <person name="Pichon C."/>
            <person name="Rouy Z."/>
            <person name="Ruf C.S."/>
            <person name="Schneider D."/>
            <person name="Tourret J."/>
            <person name="Vacherie B."/>
            <person name="Vallenet D."/>
            <person name="Medigue C."/>
            <person name="Rocha E.P.C."/>
            <person name="Denamur E."/>
        </authorList>
    </citation>
    <scope>NUCLEOTIDE SEQUENCE [LARGE SCALE GENOMIC DNA]</scope>
    <source>
        <strain>S88 / ExPEC</strain>
    </source>
</reference>
<comment type="function">
    <text evidence="1">Catalyzes the isomerization of L-ribulose 5-phosphate to D-xylulose 5-phosphate. Is involved in the anaerobic L-ascorbate utilization.</text>
</comment>
<comment type="catalytic activity">
    <reaction evidence="1">
        <text>L-ribulose 5-phosphate = D-xylulose 5-phosphate</text>
        <dbReference type="Rhea" id="RHEA:22368"/>
        <dbReference type="ChEBI" id="CHEBI:57737"/>
        <dbReference type="ChEBI" id="CHEBI:58226"/>
        <dbReference type="EC" id="5.1.3.4"/>
    </reaction>
</comment>
<comment type="cofactor">
    <cofactor evidence="1">
        <name>Zn(2+)</name>
        <dbReference type="ChEBI" id="CHEBI:29105"/>
    </cofactor>
    <text evidence="1">Binds 1 zinc ion per subunit.</text>
</comment>
<comment type="pathway">
    <text evidence="1">Cofactor degradation; L-ascorbate degradation; D-xylulose 5-phosphate from L-ascorbate: step 4/4.</text>
</comment>
<comment type="induction">
    <text evidence="1">Induced by L-ascorbate. Repressed by UlaR.</text>
</comment>
<comment type="similarity">
    <text evidence="1">Belongs to the aldolase class II family. AraD/FucA subfamily.</text>
</comment>
<accession>B7MLK3</accession>
<keyword id="KW-0119">Carbohydrate metabolism</keyword>
<keyword id="KW-0413">Isomerase</keyword>
<keyword id="KW-0479">Metal-binding</keyword>
<keyword id="KW-1185">Reference proteome</keyword>
<keyword id="KW-0862">Zinc</keyword>
<sequence>MQKLKQQVFEANMELPRYGLVTFTWGNVSAIDRERGLVVIKPSGVAYETMKADDMVVVDMSGNVVEGEYRPSSDTATHLELYRRYPSLGGIVHTHSTHATAWAQAGLAIPALGTTHADYFFGDIPCTRGLSKEEVQGEYELNTGKVIIETLGDAEPLHTPGIVVYQHGPFAWGKDAHDAVHNAVVMEEVAKMAWIARSINPQLNHIDSFLMNKHFMRKHGPNAYYGQK</sequence>